<gene>
    <name type="primary">psmA1</name>
    <name type="ordered locus">SAB0401.4</name>
</gene>
<keyword id="KW-0204">Cytolysis</keyword>
<keyword id="KW-0843">Virulence</keyword>
<comment type="function">
    <text evidence="1">Peptide which can recruit, activate and subsequently lyse neutrophils, thus eliminating the main cellular defense against infection.</text>
</comment>
<comment type="similarity">
    <text evidence="2">Belongs to the phenol-soluble modulin alpha peptides family.</text>
</comment>
<accession>P0C7Y3</accession>
<evidence type="ECO:0000250" key="1">
    <source>
        <dbReference type="UniProtKB" id="A9JX05"/>
    </source>
</evidence>
<evidence type="ECO:0000305" key="2"/>
<proteinExistence type="inferred from homology"/>
<reference key="1">
    <citation type="journal article" date="2007" name="PLoS ONE">
        <title>Molecular correlates of host specialization in Staphylococcus aureus.</title>
        <authorList>
            <person name="Herron-Olson L."/>
            <person name="Fitzgerald J.R."/>
            <person name="Musser J.M."/>
            <person name="Kapur V."/>
        </authorList>
    </citation>
    <scope>NUCLEOTIDE SEQUENCE [LARGE SCALE GENOMIC DNA]</scope>
    <source>
        <strain>bovine RF122 / ET3-1</strain>
    </source>
</reference>
<dbReference type="EMBL" id="AJ938182">
    <property type="status" value="NOT_ANNOTATED_CDS"/>
    <property type="molecule type" value="Genomic_DNA"/>
</dbReference>
<dbReference type="SMR" id="P0C7Y3"/>
<dbReference type="GO" id="GO:0031640">
    <property type="term" value="P:killing of cells of another organism"/>
    <property type="evidence" value="ECO:0007669"/>
    <property type="project" value="UniProtKB-KW"/>
</dbReference>
<dbReference type="InterPro" id="IPR031429">
    <property type="entry name" value="PSM_alpha"/>
</dbReference>
<dbReference type="NCBIfam" id="NF033425">
    <property type="entry name" value="PSM_alpha_1_2"/>
    <property type="match status" value="1"/>
</dbReference>
<dbReference type="Pfam" id="PF17063">
    <property type="entry name" value="PSMalpha"/>
    <property type="match status" value="1"/>
</dbReference>
<sequence>MGIIAGIIKVIKSLIEQFTGK</sequence>
<organism>
    <name type="scientific">Staphylococcus aureus (strain bovine RF122 / ET3-1)</name>
    <dbReference type="NCBI Taxonomy" id="273036"/>
    <lineage>
        <taxon>Bacteria</taxon>
        <taxon>Bacillati</taxon>
        <taxon>Bacillota</taxon>
        <taxon>Bacilli</taxon>
        <taxon>Bacillales</taxon>
        <taxon>Staphylococcaceae</taxon>
        <taxon>Staphylococcus</taxon>
    </lineage>
</organism>
<feature type="peptide" id="PRO_0000345034" description="Phenol-soluble modulin alpha 1 peptide">
    <location>
        <begin position="1"/>
        <end position="21"/>
    </location>
</feature>
<protein>
    <recommendedName>
        <fullName>Phenol-soluble modulin alpha 1 peptide</fullName>
    </recommendedName>
</protein>
<name>PSMA1_STAAB</name>